<dbReference type="EC" id="2.5.1.19" evidence="2"/>
<dbReference type="EMBL" id="M61905">
    <property type="protein sequence ID" value="AAA34072.1"/>
    <property type="molecule type" value="mRNA"/>
</dbReference>
<dbReference type="PIR" id="S18354">
    <property type="entry name" value="S18354"/>
</dbReference>
<dbReference type="SMR" id="P23281"/>
<dbReference type="STRING" id="4097.P23281"/>
<dbReference type="PaxDb" id="4097-P23281"/>
<dbReference type="UniPathway" id="UPA00053">
    <property type="reaction ID" value="UER00089"/>
</dbReference>
<dbReference type="Proteomes" id="UP000084051">
    <property type="component" value="Unplaced"/>
</dbReference>
<dbReference type="GO" id="GO:0009507">
    <property type="term" value="C:chloroplast"/>
    <property type="evidence" value="ECO:0007669"/>
    <property type="project" value="UniProtKB-SubCell"/>
</dbReference>
<dbReference type="GO" id="GO:0003866">
    <property type="term" value="F:3-phosphoshikimate 1-carboxyvinyltransferase activity"/>
    <property type="evidence" value="ECO:0000318"/>
    <property type="project" value="GO_Central"/>
</dbReference>
<dbReference type="GO" id="GO:0008652">
    <property type="term" value="P:amino acid biosynthetic process"/>
    <property type="evidence" value="ECO:0007669"/>
    <property type="project" value="UniProtKB-KW"/>
</dbReference>
<dbReference type="GO" id="GO:0009073">
    <property type="term" value="P:aromatic amino acid family biosynthetic process"/>
    <property type="evidence" value="ECO:0007669"/>
    <property type="project" value="UniProtKB-KW"/>
</dbReference>
<dbReference type="GO" id="GO:0009423">
    <property type="term" value="P:chorismate biosynthetic process"/>
    <property type="evidence" value="ECO:0000318"/>
    <property type="project" value="GO_Central"/>
</dbReference>
<dbReference type="CDD" id="cd01556">
    <property type="entry name" value="EPSP_synthase"/>
    <property type="match status" value="1"/>
</dbReference>
<dbReference type="FunFam" id="3.65.10.10:FF:000009">
    <property type="entry name" value="3-phosphoshikimate 1-carboxyvinyltransferase"/>
    <property type="match status" value="1"/>
</dbReference>
<dbReference type="Gene3D" id="3.65.10.10">
    <property type="entry name" value="Enolpyruvate transferase domain"/>
    <property type="match status" value="2"/>
</dbReference>
<dbReference type="InterPro" id="IPR001986">
    <property type="entry name" value="Enolpyruvate_Tfrase_dom"/>
</dbReference>
<dbReference type="InterPro" id="IPR036968">
    <property type="entry name" value="Enolpyruvate_Tfrase_sf"/>
</dbReference>
<dbReference type="InterPro" id="IPR006264">
    <property type="entry name" value="EPSP_synthase"/>
</dbReference>
<dbReference type="InterPro" id="IPR023193">
    <property type="entry name" value="EPSP_synthase_CS"/>
</dbReference>
<dbReference type="InterPro" id="IPR013792">
    <property type="entry name" value="RNA3'P_cycl/enolpyr_Trfase_a/b"/>
</dbReference>
<dbReference type="NCBIfam" id="TIGR01356">
    <property type="entry name" value="aroA"/>
    <property type="match status" value="1"/>
</dbReference>
<dbReference type="PANTHER" id="PTHR21090:SF31">
    <property type="entry name" value="3-PHOSPHOSHIKIMATE 1-CARBOXYVINYLTRANSFERASE"/>
    <property type="match status" value="1"/>
</dbReference>
<dbReference type="PANTHER" id="PTHR21090">
    <property type="entry name" value="AROM/DEHYDROQUINATE SYNTHASE"/>
    <property type="match status" value="1"/>
</dbReference>
<dbReference type="Pfam" id="PF00275">
    <property type="entry name" value="EPSP_synthase"/>
    <property type="match status" value="1"/>
</dbReference>
<dbReference type="SUPFAM" id="SSF55205">
    <property type="entry name" value="EPT/RTPC-like"/>
    <property type="match status" value="1"/>
</dbReference>
<dbReference type="PROSITE" id="PS00885">
    <property type="entry name" value="EPSP_SYNTHASE_2"/>
    <property type="match status" value="1"/>
</dbReference>
<protein>
    <recommendedName>
        <fullName>3-phosphoshikimate 1-carboxyvinyltransferase 2</fullName>
        <ecNumber evidence="2">2.5.1.19</ecNumber>
    </recommendedName>
    <alternativeName>
        <fullName>5-enolpyruvylshikimate-3-phosphate synthase 2</fullName>
        <shortName>EPSP synthase 2</shortName>
    </alternativeName>
</protein>
<comment type="function">
    <text evidence="2">Catalyzes the transfer of the enolpyruvyl moiety of phosphoenolpyruvate (PEP) to the 5-hydroxyl of shikimate-3-phosphate (S3P) to produce enolpyruvyl shikimate-3-phosphate and inorganic phosphate.</text>
</comment>
<comment type="catalytic activity">
    <reaction evidence="2">
        <text>3-phosphoshikimate + phosphoenolpyruvate = 5-O-(1-carboxyvinyl)-3-phosphoshikimate + phosphate</text>
        <dbReference type="Rhea" id="RHEA:21256"/>
        <dbReference type="ChEBI" id="CHEBI:43474"/>
        <dbReference type="ChEBI" id="CHEBI:57701"/>
        <dbReference type="ChEBI" id="CHEBI:58702"/>
        <dbReference type="ChEBI" id="CHEBI:145989"/>
        <dbReference type="EC" id="2.5.1.19"/>
    </reaction>
    <physiologicalReaction direction="left-to-right" evidence="2">
        <dbReference type="Rhea" id="RHEA:21257"/>
    </physiologicalReaction>
</comment>
<comment type="pathway">
    <text evidence="2">Metabolic intermediate biosynthesis; chorismate biosynthesis; chorismate from D-erythrose 4-phosphate and phosphoenolpyruvate: step 6/7.</text>
</comment>
<comment type="subcellular location">
    <subcellularLocation>
        <location>Plastid</location>
        <location>Chloroplast</location>
    </subcellularLocation>
</comment>
<comment type="miscellaneous">
    <text>This enzyme is the target of the potent, broad-spectrum herbicide, glyphosate [n-(phosphonomethyl)glycine]. Overproduction of EPSP leads to glyphosate tolerance.</text>
</comment>
<comment type="similarity">
    <text evidence="4">Belongs to the EPSP synthase family.</text>
</comment>
<accession>P23281</accession>
<name>AROA2_TOBAC</name>
<sequence length="338" mass="36319">LTAAVAVAGGNSRYVLDGVPRMRERPIGDLVDGLKQLGAEVDCFLGTKCPPVRIVSKGGLPGGKVKLSGSISSQYLTALLMAAPLALGDVEIEIIDKLISVLYVEMTLKLMERFGISVEHSSSWDRFVVRGGQKYKSPGKAYVEGDASSASYFLAGAAVTGGTVTVEGCGTSSLQGDVKFAEVLEQMGAEVTWTENSVTVKGPPRNSSAMKHLRAIDVNMNKMPDVAMTLAVVALFADGPTAIRDVASWRVKETERMIAICTELRKLGATVEEGPDYCIITPPEKLNVTEIDTYDDHRMAMAFSLAACADVPVTINDPGCTRKTFPNYFDVLQQYSKH</sequence>
<reference key="1">
    <citation type="journal article" date="1991" name="Plant Mol. Biol.">
        <title>Expression and stability of amplified genes encoding 5-enolpyruvylshikimate-3-phosphate synthase in glyphosate-tolerant tobacco cells.</title>
        <authorList>
            <person name="Wang Y."/>
            <person name="Jones J."/>
            <person name="Weller S."/>
            <person name="Goldsbrough P.B."/>
        </authorList>
    </citation>
    <scope>NUCLEOTIDE SEQUENCE [MRNA]</scope>
</reference>
<evidence type="ECO:0000250" key="1">
    <source>
        <dbReference type="UniProtKB" id="P0A6D3"/>
    </source>
</evidence>
<evidence type="ECO:0000250" key="2">
    <source>
        <dbReference type="UniProtKB" id="P11043"/>
    </source>
</evidence>
<evidence type="ECO:0000250" key="3">
    <source>
        <dbReference type="UniProtKB" id="P9WPY5"/>
    </source>
</evidence>
<evidence type="ECO:0000305" key="4"/>
<keyword id="KW-0028">Amino-acid biosynthesis</keyword>
<keyword id="KW-0057">Aromatic amino acid biosynthesis</keyword>
<keyword id="KW-0150">Chloroplast</keyword>
<keyword id="KW-0934">Plastid</keyword>
<keyword id="KW-1185">Reference proteome</keyword>
<keyword id="KW-0808">Transferase</keyword>
<organism>
    <name type="scientific">Nicotiana tabacum</name>
    <name type="common">Common tobacco</name>
    <dbReference type="NCBI Taxonomy" id="4097"/>
    <lineage>
        <taxon>Eukaryota</taxon>
        <taxon>Viridiplantae</taxon>
        <taxon>Streptophyta</taxon>
        <taxon>Embryophyta</taxon>
        <taxon>Tracheophyta</taxon>
        <taxon>Spermatophyta</taxon>
        <taxon>Magnoliopsida</taxon>
        <taxon>eudicotyledons</taxon>
        <taxon>Gunneridae</taxon>
        <taxon>Pentapetalae</taxon>
        <taxon>asterids</taxon>
        <taxon>lamiids</taxon>
        <taxon>Solanales</taxon>
        <taxon>Solanaceae</taxon>
        <taxon>Nicotianoideae</taxon>
        <taxon>Nicotianeae</taxon>
        <taxon>Nicotiana</taxon>
    </lineage>
</organism>
<gene>
    <name type="primary">EPSPS-2</name>
</gene>
<feature type="chain" id="PRO_0000088341" description="3-phosphoshikimate 1-carboxyvinyltransferase 2">
    <location>
        <begin position="1" status="less than"/>
        <end position="338"/>
    </location>
</feature>
<feature type="active site" description="Proton acceptor" evidence="1">
    <location>
        <position position="225"/>
    </location>
</feature>
<feature type="binding site" evidence="3">
    <location>
        <position position="25"/>
    </location>
    <ligand>
        <name>phosphoenolpyruvate</name>
        <dbReference type="ChEBI" id="CHEBI:58702"/>
    </ligand>
</feature>
<feature type="binding site" evidence="1">
    <location>
        <position position="72"/>
    </location>
    <ligand>
        <name>3-phosphoshikimate</name>
        <dbReference type="ChEBI" id="CHEBI:145989"/>
    </ligand>
</feature>
<feature type="binding site" evidence="1">
    <location>
        <position position="73"/>
    </location>
    <ligand>
        <name>3-phosphoshikimate</name>
        <dbReference type="ChEBI" id="CHEBI:145989"/>
    </ligand>
</feature>
<feature type="binding site" evidence="1">
    <location>
        <position position="74"/>
    </location>
    <ligand>
        <name>3-phosphoshikimate</name>
        <dbReference type="ChEBI" id="CHEBI:145989"/>
    </ligand>
</feature>
<feature type="binding site" evidence="3">
    <location>
        <position position="74"/>
    </location>
    <ligand>
        <name>phosphoenolpyruvate</name>
        <dbReference type="ChEBI" id="CHEBI:58702"/>
    </ligand>
</feature>
<feature type="binding site" evidence="1">
    <location>
        <position position="100"/>
    </location>
    <ligand>
        <name>3-phosphoshikimate</name>
        <dbReference type="ChEBI" id="CHEBI:145989"/>
    </ligand>
</feature>
<feature type="binding site" evidence="1">
    <location>
        <position position="225"/>
    </location>
    <ligand>
        <name>3-phosphoshikimate</name>
        <dbReference type="ChEBI" id="CHEBI:145989"/>
    </ligand>
</feature>
<feature type="binding site" evidence="1">
    <location>
        <position position="252"/>
    </location>
    <ligand>
        <name>3-phosphoshikimate</name>
        <dbReference type="ChEBI" id="CHEBI:145989"/>
    </ligand>
</feature>
<feature type="binding site" evidence="3">
    <location>
        <position position="256"/>
    </location>
    <ligand>
        <name>phosphoenolpyruvate</name>
        <dbReference type="ChEBI" id="CHEBI:58702"/>
    </ligand>
</feature>
<feature type="binding site" evidence="3">
    <location>
        <position position="298"/>
    </location>
    <ligand>
        <name>phosphoenolpyruvate</name>
        <dbReference type="ChEBI" id="CHEBI:58702"/>
    </ligand>
</feature>
<feature type="binding site" evidence="3">
    <location>
        <position position="323"/>
    </location>
    <ligand>
        <name>phosphoenolpyruvate</name>
        <dbReference type="ChEBI" id="CHEBI:58702"/>
    </ligand>
</feature>
<feature type="non-terminal residue">
    <location>
        <position position="1"/>
    </location>
</feature>
<proteinExistence type="evidence at transcript level"/>